<keyword id="KW-0131">Cell cycle</keyword>
<keyword id="KW-0132">Cell division</keyword>
<keyword id="KW-0143">Chaperone</keyword>
<keyword id="KW-0963">Cytoplasm</keyword>
<keyword id="KW-0413">Isomerase</keyword>
<keyword id="KW-0697">Rotamase</keyword>
<protein>
    <recommendedName>
        <fullName evidence="1">Trigger factor</fullName>
        <shortName evidence="1">TF</shortName>
        <ecNumber evidence="1">5.2.1.8</ecNumber>
    </recommendedName>
    <alternativeName>
        <fullName evidence="1">PPIase</fullName>
    </alternativeName>
</protein>
<feature type="chain" id="PRO_1000115588" description="Trigger factor">
    <location>
        <begin position="1"/>
        <end position="427"/>
    </location>
</feature>
<feature type="domain" description="PPIase FKBP-type" evidence="1">
    <location>
        <begin position="163"/>
        <end position="248"/>
    </location>
</feature>
<comment type="function">
    <text evidence="1">Involved in protein export. Acts as a chaperone by maintaining the newly synthesized protein in an open conformation. Functions as a peptidyl-prolyl cis-trans isomerase.</text>
</comment>
<comment type="catalytic activity">
    <reaction evidence="1">
        <text>[protein]-peptidylproline (omega=180) = [protein]-peptidylproline (omega=0)</text>
        <dbReference type="Rhea" id="RHEA:16237"/>
        <dbReference type="Rhea" id="RHEA-COMP:10747"/>
        <dbReference type="Rhea" id="RHEA-COMP:10748"/>
        <dbReference type="ChEBI" id="CHEBI:83833"/>
        <dbReference type="ChEBI" id="CHEBI:83834"/>
        <dbReference type="EC" id="5.2.1.8"/>
    </reaction>
</comment>
<comment type="subcellular location">
    <subcellularLocation>
        <location>Cytoplasm</location>
    </subcellularLocation>
    <text evidence="1">About half TF is bound to the ribosome near the polypeptide exit tunnel while the other half is free in the cytoplasm.</text>
</comment>
<comment type="domain">
    <text evidence="1">Consists of 3 domains; the N-terminus binds the ribosome, the middle domain has PPIase activity, while the C-terminus has intrinsic chaperone activity on its own.</text>
</comment>
<comment type="similarity">
    <text evidence="1">Belongs to the FKBP-type PPIase family. Tig subfamily.</text>
</comment>
<name>TIG_STRPI</name>
<reference key="1">
    <citation type="journal article" date="2010" name="Genome Biol.">
        <title>Structure and dynamics of the pan-genome of Streptococcus pneumoniae and closely related species.</title>
        <authorList>
            <person name="Donati C."/>
            <person name="Hiller N.L."/>
            <person name="Tettelin H."/>
            <person name="Muzzi A."/>
            <person name="Croucher N.J."/>
            <person name="Angiuoli S.V."/>
            <person name="Oggioni M."/>
            <person name="Dunning Hotopp J.C."/>
            <person name="Hu F.Z."/>
            <person name="Riley D.R."/>
            <person name="Covacci A."/>
            <person name="Mitchell T.J."/>
            <person name="Bentley S.D."/>
            <person name="Kilian M."/>
            <person name="Ehrlich G.D."/>
            <person name="Rappuoli R."/>
            <person name="Moxon E.R."/>
            <person name="Masignani V."/>
        </authorList>
    </citation>
    <scope>NUCLEOTIDE SEQUENCE [LARGE SCALE GENOMIC DNA]</scope>
    <source>
        <strain>Hungary19A-6</strain>
    </source>
</reference>
<evidence type="ECO:0000255" key="1">
    <source>
        <dbReference type="HAMAP-Rule" id="MF_00303"/>
    </source>
</evidence>
<proteinExistence type="inferred from homology"/>
<gene>
    <name evidence="1" type="primary">tig</name>
    <name type="ordered locus">SPH_0509</name>
</gene>
<sequence length="427" mass="47312">MSVSFENKETNRGVLTFTISQDQIKPELDRVFKSVKKSLNVPGFRKGHLPRPIFDKKFGEESLYQDVMNALLPNAYEAAVKEAGLEVVAQPKIDVTSMEKGQDWVITAEVVTKPEVKLGDYKNLEVSVDVEKEVTDADVEERIERERNNLAELVIKEAAAENGDTVVIDFVGSIDGVEFDGGKGENFSLGLGSGQFIPGFEDQLVGHSAGETVDVIVTFPEDYQAEDLAGKEAQFVTTIHEVKAKEVPALDDELAKDIDEEVETLADLKEKYRKELAAAKEEAYKDAVEGAAIDTAVENAEIVELPEEMIHEEVHRSVNEFLGNLQRQGINPDMYFQITGTTQEDLHNQYQAEAESRTKTNLVIEAVAKAEGFDASEEEIQKEVEQLAADYNMEVAQVQNLLSADMLKHDITIKKAVELITSTATVK</sequence>
<dbReference type="EC" id="5.2.1.8" evidence="1"/>
<dbReference type="EMBL" id="CP000936">
    <property type="protein sequence ID" value="ACA37142.1"/>
    <property type="molecule type" value="Genomic_DNA"/>
</dbReference>
<dbReference type="RefSeq" id="WP_000116474.1">
    <property type="nucleotide sequence ID" value="NC_010380.1"/>
</dbReference>
<dbReference type="SMR" id="B1I9J5"/>
<dbReference type="KEGG" id="spv:SPH_0509"/>
<dbReference type="HOGENOM" id="CLU_033058_3_2_9"/>
<dbReference type="Proteomes" id="UP000002163">
    <property type="component" value="Chromosome"/>
</dbReference>
<dbReference type="GO" id="GO:0005737">
    <property type="term" value="C:cytoplasm"/>
    <property type="evidence" value="ECO:0007669"/>
    <property type="project" value="UniProtKB-SubCell"/>
</dbReference>
<dbReference type="GO" id="GO:0003755">
    <property type="term" value="F:peptidyl-prolyl cis-trans isomerase activity"/>
    <property type="evidence" value="ECO:0007669"/>
    <property type="project" value="UniProtKB-UniRule"/>
</dbReference>
<dbReference type="GO" id="GO:0044183">
    <property type="term" value="F:protein folding chaperone"/>
    <property type="evidence" value="ECO:0007669"/>
    <property type="project" value="TreeGrafter"/>
</dbReference>
<dbReference type="GO" id="GO:0043022">
    <property type="term" value="F:ribosome binding"/>
    <property type="evidence" value="ECO:0007669"/>
    <property type="project" value="TreeGrafter"/>
</dbReference>
<dbReference type="GO" id="GO:0051083">
    <property type="term" value="P:'de novo' cotranslational protein folding"/>
    <property type="evidence" value="ECO:0007669"/>
    <property type="project" value="TreeGrafter"/>
</dbReference>
<dbReference type="GO" id="GO:0051301">
    <property type="term" value="P:cell division"/>
    <property type="evidence" value="ECO:0007669"/>
    <property type="project" value="UniProtKB-KW"/>
</dbReference>
<dbReference type="GO" id="GO:0061077">
    <property type="term" value="P:chaperone-mediated protein folding"/>
    <property type="evidence" value="ECO:0007669"/>
    <property type="project" value="TreeGrafter"/>
</dbReference>
<dbReference type="GO" id="GO:0015031">
    <property type="term" value="P:protein transport"/>
    <property type="evidence" value="ECO:0007669"/>
    <property type="project" value="UniProtKB-UniRule"/>
</dbReference>
<dbReference type="GO" id="GO:0043335">
    <property type="term" value="P:protein unfolding"/>
    <property type="evidence" value="ECO:0007669"/>
    <property type="project" value="TreeGrafter"/>
</dbReference>
<dbReference type="FunFam" id="3.10.50.40:FF:000001">
    <property type="entry name" value="Trigger factor"/>
    <property type="match status" value="1"/>
</dbReference>
<dbReference type="Gene3D" id="3.10.50.40">
    <property type="match status" value="1"/>
</dbReference>
<dbReference type="Gene3D" id="3.30.70.1050">
    <property type="entry name" value="Trigger factor ribosome-binding domain"/>
    <property type="match status" value="1"/>
</dbReference>
<dbReference type="Gene3D" id="1.10.3120.10">
    <property type="entry name" value="Trigger factor, C-terminal domain"/>
    <property type="match status" value="1"/>
</dbReference>
<dbReference type="HAMAP" id="MF_00303">
    <property type="entry name" value="Trigger_factor_Tig"/>
    <property type="match status" value="1"/>
</dbReference>
<dbReference type="InterPro" id="IPR046357">
    <property type="entry name" value="PPIase_dom_sf"/>
</dbReference>
<dbReference type="InterPro" id="IPR001179">
    <property type="entry name" value="PPIase_FKBP_dom"/>
</dbReference>
<dbReference type="InterPro" id="IPR005215">
    <property type="entry name" value="Trig_fac"/>
</dbReference>
<dbReference type="InterPro" id="IPR008880">
    <property type="entry name" value="Trigger_fac_C"/>
</dbReference>
<dbReference type="InterPro" id="IPR037041">
    <property type="entry name" value="Trigger_fac_C_sf"/>
</dbReference>
<dbReference type="InterPro" id="IPR008881">
    <property type="entry name" value="Trigger_fac_ribosome-bd_bac"/>
</dbReference>
<dbReference type="InterPro" id="IPR036611">
    <property type="entry name" value="Trigger_fac_ribosome-bd_sf"/>
</dbReference>
<dbReference type="InterPro" id="IPR027304">
    <property type="entry name" value="Trigger_fact/SurA_dom_sf"/>
</dbReference>
<dbReference type="NCBIfam" id="TIGR00115">
    <property type="entry name" value="tig"/>
    <property type="match status" value="1"/>
</dbReference>
<dbReference type="PANTHER" id="PTHR30560">
    <property type="entry name" value="TRIGGER FACTOR CHAPERONE AND PEPTIDYL-PROLYL CIS/TRANS ISOMERASE"/>
    <property type="match status" value="1"/>
</dbReference>
<dbReference type="PANTHER" id="PTHR30560:SF3">
    <property type="entry name" value="TRIGGER FACTOR-LIKE PROTEIN TIG, CHLOROPLASTIC"/>
    <property type="match status" value="1"/>
</dbReference>
<dbReference type="Pfam" id="PF00254">
    <property type="entry name" value="FKBP_C"/>
    <property type="match status" value="1"/>
</dbReference>
<dbReference type="Pfam" id="PF05698">
    <property type="entry name" value="Trigger_C"/>
    <property type="match status" value="1"/>
</dbReference>
<dbReference type="Pfam" id="PF05697">
    <property type="entry name" value="Trigger_N"/>
    <property type="match status" value="1"/>
</dbReference>
<dbReference type="PIRSF" id="PIRSF003095">
    <property type="entry name" value="Trigger_factor"/>
    <property type="match status" value="1"/>
</dbReference>
<dbReference type="SUPFAM" id="SSF54534">
    <property type="entry name" value="FKBP-like"/>
    <property type="match status" value="1"/>
</dbReference>
<dbReference type="SUPFAM" id="SSF109998">
    <property type="entry name" value="Triger factor/SurA peptide-binding domain-like"/>
    <property type="match status" value="1"/>
</dbReference>
<dbReference type="SUPFAM" id="SSF102735">
    <property type="entry name" value="Trigger factor ribosome-binding domain"/>
    <property type="match status" value="1"/>
</dbReference>
<dbReference type="PROSITE" id="PS50059">
    <property type="entry name" value="FKBP_PPIASE"/>
    <property type="match status" value="1"/>
</dbReference>
<accession>B1I9J5</accession>
<organism>
    <name type="scientific">Streptococcus pneumoniae (strain Hungary19A-6)</name>
    <dbReference type="NCBI Taxonomy" id="487214"/>
    <lineage>
        <taxon>Bacteria</taxon>
        <taxon>Bacillati</taxon>
        <taxon>Bacillota</taxon>
        <taxon>Bacilli</taxon>
        <taxon>Lactobacillales</taxon>
        <taxon>Streptococcaceae</taxon>
        <taxon>Streptococcus</taxon>
    </lineage>
</organism>